<organismHost>
    <name type="scientific">Aves</name>
    <dbReference type="NCBI Taxonomy" id="8782"/>
</organismHost>
<organismHost>
    <name type="scientific">Homo sapiens</name>
    <name type="common">Human</name>
    <dbReference type="NCBI Taxonomy" id="9606"/>
</organismHost>
<name>NEP_I57A5</name>
<sequence length="121" mass="14381">MDPNTVSSFQDILMRMSKMQLGSSSEDLNGMITQFESLKLYRDSLGETVMRMGDLHSLQNRNGKWREQLGQKFEEIRWLIEEVRHKLKITENSFEQITFMQALQLLFEVEQEIRTFSFQLI</sequence>
<comment type="function">
    <text evidence="1">Mediates the nuclear export of encapsidated genomic RNAs (ribonucleoproteins, RNPs). Acts as an adapter between viral RNPs complexes and the nuclear export machinery of the cell. Possesses no intrinsic RNA-binding activity, but includes a C-terminal M1-binding domain. This domain is believed to allow recognition of RNPs bound to the protein M1. Since protein M1 is not available in large quantities before late stages of infection, such an indirect recognition mechanism probably ensures that genomic RNPs are not exported from the host nucleus until sufficient quantities of viral mRNA and progeny genomic RNA have been synthesized. Furthermore, the RNPs enter the host cytoplasm only when associated with the M1 protein that is necessary to guide them to the plasma membrane. May down-regulate viral RNA synthesis when overproduced.</text>
</comment>
<comment type="subunit">
    <text evidence="1">Interacts with protein M1. May interact with host nucleoporin RAB/HRB and exportin XPO1/CRM1.</text>
</comment>
<comment type="subcellular location">
    <subcellularLocation>
        <location evidence="1">Virion</location>
    </subcellularLocation>
    <subcellularLocation>
        <location evidence="1">Host nucleus</location>
    </subcellularLocation>
</comment>
<comment type="alternative products">
    <event type="alternative splicing"/>
    <isoform>
        <id>Q6XTK1-1</id>
        <name>NEP</name>
        <name>NS2</name>
        <sequence type="displayed"/>
    </isoform>
    <isoform>
        <id>Q6XTK0-1</id>
        <name>NS1</name>
        <sequence type="external"/>
    </isoform>
</comment>
<comment type="similarity">
    <text evidence="1">Belongs to the influenza viruses NEP family.</text>
</comment>
<accession>Q6XTK1</accession>
<protein>
    <recommendedName>
        <fullName evidence="1">Nuclear export protein</fullName>
        <shortName evidence="1">NEP</shortName>
    </recommendedName>
    <alternativeName>
        <fullName evidence="1">Non-structural protein 2</fullName>
        <shortName evidence="1">NS2</shortName>
    </alternativeName>
</protein>
<keyword id="KW-0025">Alternative splicing</keyword>
<keyword id="KW-1048">Host nucleus</keyword>
<keyword id="KW-0945">Host-virus interaction</keyword>
<keyword id="KW-0813">Transport</keyword>
<keyword id="KW-0946">Virion</keyword>
<feature type="chain" id="PRO_0000324198" description="Nuclear export protein">
    <location>
        <begin position="1"/>
        <end position="121"/>
    </location>
</feature>
<feature type="short sequence motif" description="Nuclear export signal" evidence="1">
    <location>
        <begin position="12"/>
        <end position="21"/>
    </location>
</feature>
<feature type="short sequence motif" description="Nuclear export signal" evidence="1">
    <location>
        <begin position="85"/>
        <end position="94"/>
    </location>
</feature>
<gene>
    <name evidence="1" type="primary">NS</name>
</gene>
<reference key="1">
    <citation type="journal article" date="2004" name="Virology">
        <title>Genetic analysis of human H2N2 and early H3N2 influenza viruses, 1957-1972: evidence for genetic divergence and multiple reassortment events.</title>
        <authorList>
            <person name="Lindstrom S.E."/>
            <person name="Cox N.J."/>
            <person name="Klimov A."/>
        </authorList>
    </citation>
    <scope>NUCLEOTIDE SEQUENCE [GENOMIC RNA]</scope>
</reference>
<evidence type="ECO:0000255" key="1">
    <source>
        <dbReference type="HAMAP-Rule" id="MF_04067"/>
    </source>
</evidence>
<proteinExistence type="inferred from homology"/>
<organism>
    <name type="scientific">Influenza A virus (strain A/Singapore/1/1957 H2N2)</name>
    <dbReference type="NCBI Taxonomy" id="382781"/>
    <lineage>
        <taxon>Viruses</taxon>
        <taxon>Riboviria</taxon>
        <taxon>Orthornavirae</taxon>
        <taxon>Negarnaviricota</taxon>
        <taxon>Polyploviricotina</taxon>
        <taxon>Insthoviricetes</taxon>
        <taxon>Articulavirales</taxon>
        <taxon>Orthomyxoviridae</taxon>
        <taxon>Alphainfluenzavirus</taxon>
        <taxon>Alphainfluenzavirus influenzae</taxon>
        <taxon>Influenza A virus</taxon>
    </lineage>
</organism>
<dbReference type="EMBL" id="AY210151">
    <property type="protein sequence ID" value="AAO46568.1"/>
    <property type="molecule type" value="Genomic_RNA"/>
</dbReference>
<dbReference type="SMR" id="Q6XTK1"/>
<dbReference type="GO" id="GO:0042025">
    <property type="term" value="C:host cell nucleus"/>
    <property type="evidence" value="ECO:0007669"/>
    <property type="project" value="UniProtKB-SubCell"/>
</dbReference>
<dbReference type="GO" id="GO:0044423">
    <property type="term" value="C:virion component"/>
    <property type="evidence" value="ECO:0007669"/>
    <property type="project" value="UniProtKB-UniRule"/>
</dbReference>
<dbReference type="GO" id="GO:0039675">
    <property type="term" value="P:exit of virus from host cell nucleus through nuclear pore"/>
    <property type="evidence" value="ECO:0007669"/>
    <property type="project" value="UniProtKB-UniRule"/>
</dbReference>
<dbReference type="Gene3D" id="1.10.287.230">
    <property type="match status" value="1"/>
</dbReference>
<dbReference type="Gene3D" id="1.10.287.10">
    <property type="entry name" value="S15/NS1, RNA-binding"/>
    <property type="match status" value="1"/>
</dbReference>
<dbReference type="HAMAP" id="MF_04067">
    <property type="entry name" value="INFV_NEP"/>
    <property type="match status" value="1"/>
</dbReference>
<dbReference type="InterPro" id="IPR000968">
    <property type="entry name" value="Flu_NS2"/>
</dbReference>
<dbReference type="Pfam" id="PF00601">
    <property type="entry name" value="Flu_NS2"/>
    <property type="match status" value="1"/>
</dbReference>
<dbReference type="SUPFAM" id="SSF101156">
    <property type="entry name" value="Nonstructural protein ns2, Nep, M1-binding domain"/>
    <property type="match status" value="1"/>
</dbReference>